<dbReference type="EC" id="4.1.99.17" evidence="1"/>
<dbReference type="EMBL" id="CP000948">
    <property type="protein sequence ID" value="ACB04997.1"/>
    <property type="molecule type" value="Genomic_DNA"/>
</dbReference>
<dbReference type="RefSeq" id="WP_001276926.1">
    <property type="nucleotide sequence ID" value="NC_010473.1"/>
</dbReference>
<dbReference type="SMR" id="B1XBZ7"/>
<dbReference type="GeneID" id="75205512"/>
<dbReference type="KEGG" id="ecd:ECDH10B_4183"/>
<dbReference type="HOGENOM" id="CLU_013181_2_1_6"/>
<dbReference type="UniPathway" id="UPA00060"/>
<dbReference type="GO" id="GO:0005829">
    <property type="term" value="C:cytosol"/>
    <property type="evidence" value="ECO:0007669"/>
    <property type="project" value="TreeGrafter"/>
</dbReference>
<dbReference type="GO" id="GO:0051539">
    <property type="term" value="F:4 iron, 4 sulfur cluster binding"/>
    <property type="evidence" value="ECO:0007669"/>
    <property type="project" value="UniProtKB-KW"/>
</dbReference>
<dbReference type="GO" id="GO:0016830">
    <property type="term" value="F:carbon-carbon lyase activity"/>
    <property type="evidence" value="ECO:0007669"/>
    <property type="project" value="InterPro"/>
</dbReference>
<dbReference type="GO" id="GO:0008270">
    <property type="term" value="F:zinc ion binding"/>
    <property type="evidence" value="ECO:0007669"/>
    <property type="project" value="UniProtKB-UniRule"/>
</dbReference>
<dbReference type="GO" id="GO:0009228">
    <property type="term" value="P:thiamine biosynthetic process"/>
    <property type="evidence" value="ECO:0007669"/>
    <property type="project" value="UniProtKB-KW"/>
</dbReference>
<dbReference type="GO" id="GO:0009229">
    <property type="term" value="P:thiamine diphosphate biosynthetic process"/>
    <property type="evidence" value="ECO:0007669"/>
    <property type="project" value="UniProtKB-UniRule"/>
</dbReference>
<dbReference type="FunFam" id="3.20.20.540:FF:000001">
    <property type="entry name" value="Phosphomethylpyrimidine synthase"/>
    <property type="match status" value="1"/>
</dbReference>
<dbReference type="Gene3D" id="6.10.250.620">
    <property type="match status" value="1"/>
</dbReference>
<dbReference type="Gene3D" id="3.20.20.540">
    <property type="entry name" value="Radical SAM ThiC family, central domain"/>
    <property type="match status" value="1"/>
</dbReference>
<dbReference type="HAMAP" id="MF_00089">
    <property type="entry name" value="ThiC"/>
    <property type="match status" value="1"/>
</dbReference>
<dbReference type="InterPro" id="IPR037509">
    <property type="entry name" value="ThiC"/>
</dbReference>
<dbReference type="InterPro" id="IPR025747">
    <property type="entry name" value="ThiC-associated_dom"/>
</dbReference>
<dbReference type="InterPro" id="IPR038521">
    <property type="entry name" value="ThiC/Bza_core_dom"/>
</dbReference>
<dbReference type="InterPro" id="IPR002817">
    <property type="entry name" value="ThiC/BzaA/B"/>
</dbReference>
<dbReference type="NCBIfam" id="NF006763">
    <property type="entry name" value="PRK09284.1"/>
    <property type="match status" value="1"/>
</dbReference>
<dbReference type="NCBIfam" id="NF009895">
    <property type="entry name" value="PRK13352.1"/>
    <property type="match status" value="1"/>
</dbReference>
<dbReference type="NCBIfam" id="TIGR00190">
    <property type="entry name" value="thiC"/>
    <property type="match status" value="1"/>
</dbReference>
<dbReference type="PANTHER" id="PTHR30557:SF1">
    <property type="entry name" value="PHOSPHOMETHYLPYRIMIDINE SYNTHASE, CHLOROPLASTIC"/>
    <property type="match status" value="1"/>
</dbReference>
<dbReference type="PANTHER" id="PTHR30557">
    <property type="entry name" value="THIAMINE BIOSYNTHESIS PROTEIN THIC"/>
    <property type="match status" value="1"/>
</dbReference>
<dbReference type="Pfam" id="PF13667">
    <property type="entry name" value="ThiC-associated"/>
    <property type="match status" value="1"/>
</dbReference>
<dbReference type="Pfam" id="PF01964">
    <property type="entry name" value="ThiC_Rad_SAM"/>
    <property type="match status" value="1"/>
</dbReference>
<dbReference type="SFLD" id="SFLDF00407">
    <property type="entry name" value="phosphomethylpyrimidine_syntha"/>
    <property type="match status" value="1"/>
</dbReference>
<dbReference type="SFLD" id="SFLDG01114">
    <property type="entry name" value="phosphomethylpyrimidine_syntha"/>
    <property type="match status" value="1"/>
</dbReference>
<dbReference type="SFLD" id="SFLDS00113">
    <property type="entry name" value="Radical_SAM_Phosphomethylpyrim"/>
    <property type="match status" value="1"/>
</dbReference>
<protein>
    <recommendedName>
        <fullName evidence="1">Phosphomethylpyrimidine synthase</fullName>
        <ecNumber evidence="1">4.1.99.17</ecNumber>
    </recommendedName>
    <alternativeName>
        <fullName evidence="1">Hydroxymethylpyrimidine phosphate synthase</fullName>
        <shortName evidence="1">HMP-P synthase</shortName>
        <shortName evidence="1">HMP-phosphate synthase</shortName>
        <shortName evidence="1">HMPP synthase</shortName>
    </alternativeName>
    <alternativeName>
        <fullName evidence="1">Thiamine biosynthesis protein ThiC</fullName>
    </alternativeName>
</protein>
<organism>
    <name type="scientific">Escherichia coli (strain K12 / DH10B)</name>
    <dbReference type="NCBI Taxonomy" id="316385"/>
    <lineage>
        <taxon>Bacteria</taxon>
        <taxon>Pseudomonadati</taxon>
        <taxon>Pseudomonadota</taxon>
        <taxon>Gammaproteobacteria</taxon>
        <taxon>Enterobacterales</taxon>
        <taxon>Enterobacteriaceae</taxon>
        <taxon>Escherichia</taxon>
    </lineage>
</organism>
<proteinExistence type="inferred from homology"/>
<evidence type="ECO:0000255" key="1">
    <source>
        <dbReference type="HAMAP-Rule" id="MF_00089"/>
    </source>
</evidence>
<feature type="chain" id="PRO_1000093208" description="Phosphomethylpyrimidine synthase">
    <location>
        <begin position="1"/>
        <end position="631"/>
    </location>
</feature>
<feature type="binding site" evidence="1">
    <location>
        <position position="239"/>
    </location>
    <ligand>
        <name>substrate</name>
    </ligand>
</feature>
<feature type="binding site" evidence="1">
    <location>
        <position position="268"/>
    </location>
    <ligand>
        <name>substrate</name>
    </ligand>
</feature>
<feature type="binding site" evidence="1">
    <location>
        <position position="297"/>
    </location>
    <ligand>
        <name>substrate</name>
    </ligand>
</feature>
<feature type="binding site" evidence="1">
    <location>
        <position position="333"/>
    </location>
    <ligand>
        <name>substrate</name>
    </ligand>
</feature>
<feature type="binding site" evidence="1">
    <location>
        <begin position="353"/>
        <end position="355"/>
    </location>
    <ligand>
        <name>substrate</name>
    </ligand>
</feature>
<feature type="binding site" evidence="1">
    <location>
        <begin position="394"/>
        <end position="397"/>
    </location>
    <ligand>
        <name>substrate</name>
    </ligand>
</feature>
<feature type="binding site" evidence="1">
    <location>
        <position position="433"/>
    </location>
    <ligand>
        <name>substrate</name>
    </ligand>
</feature>
<feature type="binding site" evidence="1">
    <location>
        <position position="437"/>
    </location>
    <ligand>
        <name>Zn(2+)</name>
        <dbReference type="ChEBI" id="CHEBI:29105"/>
    </ligand>
</feature>
<feature type="binding site" evidence="1">
    <location>
        <position position="460"/>
    </location>
    <ligand>
        <name>substrate</name>
    </ligand>
</feature>
<feature type="binding site" evidence="1">
    <location>
        <position position="501"/>
    </location>
    <ligand>
        <name>Zn(2+)</name>
        <dbReference type="ChEBI" id="CHEBI:29105"/>
    </ligand>
</feature>
<feature type="binding site" evidence="1">
    <location>
        <position position="581"/>
    </location>
    <ligand>
        <name>[4Fe-4S] cluster</name>
        <dbReference type="ChEBI" id="CHEBI:49883"/>
        <note>4Fe-4S-S-AdoMet</note>
    </ligand>
</feature>
<feature type="binding site" evidence="1">
    <location>
        <position position="584"/>
    </location>
    <ligand>
        <name>[4Fe-4S] cluster</name>
        <dbReference type="ChEBI" id="CHEBI:49883"/>
        <note>4Fe-4S-S-AdoMet</note>
    </ligand>
</feature>
<feature type="binding site" evidence="1">
    <location>
        <position position="589"/>
    </location>
    <ligand>
        <name>[4Fe-4S] cluster</name>
        <dbReference type="ChEBI" id="CHEBI:49883"/>
        <note>4Fe-4S-S-AdoMet</note>
    </ligand>
</feature>
<gene>
    <name evidence="1" type="primary">thiC</name>
    <name type="ordered locus">ECDH10B_4183</name>
</gene>
<accession>B1XBZ7</accession>
<name>THIC_ECODH</name>
<sequence length="631" mass="70850">MSATKLTRREQRARAQHFIDTLEGTAFPNSKRIYITGTHPGVRVPMREIQLSPTLIGGSKEQPQYEENEAIPVYDTSGPYGDPQIAINVQQGLAKLRQPWIDARGDTEELTVRSSDYTKARLADDGLDELRFSGVLTPKRAKAGRRVTQLHYARQGIITPEMEFIAIRENMGRERIRSEVLRHQHPGMSFGAHLPENITAEFVRDEVAAGRAIIPANINHPESEPMIIGRNFLVKVNANIGNSAVTSSIEEEVEKLVWSTRWGADTVMDLSTGRYIHETREWILRNSPVPIGTVPIYQALEKVNGIAEDLTWEAFRDTLLEQAEQGVDYFTIHAGVLLRYVPMTAKRLTGIVSRGGSIMAKWCLSHHQENFLYQHFREICEICAAYDVSLSLGDGLRPGSIQDANDEAQFAELHTLGELTKIAWEYDVQVMIEGPGHVPMQMIRRNMTEELEHCHEAPFYTLGPLTTDIAPGYDHFTSGIGAAMIGWFGCAMLCYVTPKEHLGLPNKEDVKQGLITYKIAAHAADLAKGHPGAQIRDNAMSKARFEFRWEDQFNLALDPFTARAYHDETLPQESGKVAHFCSMCGPKFCSMKISQEVRDYAATQTIEMGMADMSENFRARGGEIYLRKEEA</sequence>
<comment type="function">
    <text evidence="1">Catalyzes the synthesis of the hydroxymethylpyrimidine phosphate (HMP-P) moiety of thiamine from aminoimidazole ribotide (AIR) in a radical S-adenosyl-L-methionine (SAM)-dependent reaction.</text>
</comment>
<comment type="catalytic activity">
    <reaction evidence="1">
        <text>5-amino-1-(5-phospho-beta-D-ribosyl)imidazole + S-adenosyl-L-methionine = 4-amino-2-methyl-5-(phosphooxymethyl)pyrimidine + CO + 5'-deoxyadenosine + formate + L-methionine + 3 H(+)</text>
        <dbReference type="Rhea" id="RHEA:24840"/>
        <dbReference type="ChEBI" id="CHEBI:15378"/>
        <dbReference type="ChEBI" id="CHEBI:15740"/>
        <dbReference type="ChEBI" id="CHEBI:17245"/>
        <dbReference type="ChEBI" id="CHEBI:17319"/>
        <dbReference type="ChEBI" id="CHEBI:57844"/>
        <dbReference type="ChEBI" id="CHEBI:58354"/>
        <dbReference type="ChEBI" id="CHEBI:59789"/>
        <dbReference type="ChEBI" id="CHEBI:137981"/>
        <dbReference type="EC" id="4.1.99.17"/>
    </reaction>
</comment>
<comment type="cofactor">
    <cofactor evidence="1">
        <name>[4Fe-4S] cluster</name>
        <dbReference type="ChEBI" id="CHEBI:49883"/>
    </cofactor>
    <text evidence="1">Binds 1 [4Fe-4S] cluster per subunit. The cluster is coordinated with 3 cysteines and an exchangeable S-adenosyl-L-methionine.</text>
</comment>
<comment type="pathway">
    <text evidence="1">Cofactor biosynthesis; thiamine diphosphate biosynthesis.</text>
</comment>
<comment type="subunit">
    <text evidence="1">Homodimer.</text>
</comment>
<comment type="similarity">
    <text evidence="1">Belongs to the ThiC family.</text>
</comment>
<keyword id="KW-0004">4Fe-4S</keyword>
<keyword id="KW-0408">Iron</keyword>
<keyword id="KW-0411">Iron-sulfur</keyword>
<keyword id="KW-0456">Lyase</keyword>
<keyword id="KW-0479">Metal-binding</keyword>
<keyword id="KW-0949">S-adenosyl-L-methionine</keyword>
<keyword id="KW-0784">Thiamine biosynthesis</keyword>
<keyword id="KW-0862">Zinc</keyword>
<reference key="1">
    <citation type="journal article" date="2008" name="J. Bacteriol.">
        <title>The complete genome sequence of Escherichia coli DH10B: insights into the biology of a laboratory workhorse.</title>
        <authorList>
            <person name="Durfee T."/>
            <person name="Nelson R."/>
            <person name="Baldwin S."/>
            <person name="Plunkett G. III"/>
            <person name="Burland V."/>
            <person name="Mau B."/>
            <person name="Petrosino J.F."/>
            <person name="Qin X."/>
            <person name="Muzny D.M."/>
            <person name="Ayele M."/>
            <person name="Gibbs R.A."/>
            <person name="Csorgo B."/>
            <person name="Posfai G."/>
            <person name="Weinstock G.M."/>
            <person name="Blattner F.R."/>
        </authorList>
    </citation>
    <scope>NUCLEOTIDE SEQUENCE [LARGE SCALE GENOMIC DNA]</scope>
    <source>
        <strain>K12 / DH10B</strain>
    </source>
</reference>